<comment type="function">
    <text>Calcium-dependent, calmodulin-stimulated protein phosphatase. This subunit may have a role in the calmodulin activation of calcineurin.</text>
</comment>
<comment type="catalytic activity">
    <reaction>
        <text>O-phospho-L-seryl-[protein] + H2O = L-seryl-[protein] + phosphate</text>
        <dbReference type="Rhea" id="RHEA:20629"/>
        <dbReference type="Rhea" id="RHEA-COMP:9863"/>
        <dbReference type="Rhea" id="RHEA-COMP:11604"/>
        <dbReference type="ChEBI" id="CHEBI:15377"/>
        <dbReference type="ChEBI" id="CHEBI:29999"/>
        <dbReference type="ChEBI" id="CHEBI:43474"/>
        <dbReference type="ChEBI" id="CHEBI:83421"/>
        <dbReference type="EC" id="3.1.3.16"/>
    </reaction>
</comment>
<comment type="catalytic activity">
    <reaction>
        <text>O-phospho-L-threonyl-[protein] + H2O = L-threonyl-[protein] + phosphate</text>
        <dbReference type="Rhea" id="RHEA:47004"/>
        <dbReference type="Rhea" id="RHEA-COMP:11060"/>
        <dbReference type="Rhea" id="RHEA-COMP:11605"/>
        <dbReference type="ChEBI" id="CHEBI:15377"/>
        <dbReference type="ChEBI" id="CHEBI:30013"/>
        <dbReference type="ChEBI" id="CHEBI:43474"/>
        <dbReference type="ChEBI" id="CHEBI:61977"/>
        <dbReference type="EC" id="3.1.3.16"/>
    </reaction>
</comment>
<comment type="cofactor">
    <cofactor evidence="1">
        <name>Fe(3+)</name>
        <dbReference type="ChEBI" id="CHEBI:29034"/>
    </cofactor>
    <text evidence="1">Binds 1 Fe(3+) ion per subunit.</text>
</comment>
<comment type="cofactor">
    <cofactor evidence="1">
        <name>Zn(2+)</name>
        <dbReference type="ChEBI" id="CHEBI:29105"/>
    </cofactor>
    <text evidence="1">Binds 1 zinc ion per subunit.</text>
</comment>
<comment type="subunit">
    <text>Composed of two components (A and B), the A component is the catalytic subunit and the B component confers calcium sensitivity.</text>
</comment>
<comment type="interaction">
    <interactant intactId="EBI-12771">
        <id>P23287</id>
    </interactant>
    <interactant intactId="EBI-3976">
        <id>P06787</id>
        <label>CMD1</label>
    </interactant>
    <organismsDiffer>false</organismsDiffer>
    <experiments>5</experiments>
</comment>
<comment type="miscellaneous">
    <text evidence="3">Present with 7040 molecules/cell in log phase SD medium.</text>
</comment>
<comment type="similarity">
    <text evidence="4">Belongs to the PPP phosphatase family. PP-2B subfamily.</text>
</comment>
<keyword id="KW-0002">3D-structure</keyword>
<keyword id="KW-0007">Acetylation</keyword>
<keyword id="KW-0112">Calmodulin-binding</keyword>
<keyword id="KW-0378">Hydrolase</keyword>
<keyword id="KW-0408">Iron</keyword>
<keyword id="KW-0479">Metal-binding</keyword>
<keyword id="KW-0904">Protein phosphatase</keyword>
<keyword id="KW-1185">Reference proteome</keyword>
<keyword id="KW-0862">Zinc</keyword>
<gene>
    <name type="primary">CNA1</name>
    <name type="synonym">CMP1</name>
    <name type="ordered locus">YLR433C</name>
    <name type="ORF">L9753.6</name>
</gene>
<proteinExistence type="evidence at protein level"/>
<evidence type="ECO:0000250" key="1"/>
<evidence type="ECO:0000256" key="2">
    <source>
        <dbReference type="SAM" id="MobiDB-lite"/>
    </source>
</evidence>
<evidence type="ECO:0000269" key="3">
    <source>
    </source>
</evidence>
<evidence type="ECO:0000305" key="4"/>
<evidence type="ECO:0007744" key="5">
    <source>
    </source>
</evidence>
<evidence type="ECO:0007829" key="6">
    <source>
        <dbReference type="PDB" id="2LHI"/>
    </source>
</evidence>
<accession>P23287</accession>
<accession>D6VZ68</accession>
<dbReference type="EC" id="3.1.3.16"/>
<dbReference type="EMBL" id="M64839">
    <property type="protein sequence ID" value="AAA34465.1"/>
    <property type="molecule type" value="Genomic_DNA"/>
</dbReference>
<dbReference type="EMBL" id="X66490">
    <property type="protein sequence ID" value="CAA47117.1"/>
    <property type="molecule type" value="Genomic_DNA"/>
</dbReference>
<dbReference type="EMBL" id="X54963">
    <property type="protein sequence ID" value="CAA38711.1"/>
    <property type="molecule type" value="Genomic_DNA"/>
</dbReference>
<dbReference type="EMBL" id="U21094">
    <property type="protein sequence ID" value="AAB67518.1"/>
    <property type="molecule type" value="Genomic_DNA"/>
</dbReference>
<dbReference type="EMBL" id="AY693079">
    <property type="protein sequence ID" value="AAT93098.1"/>
    <property type="molecule type" value="Genomic_DNA"/>
</dbReference>
<dbReference type="EMBL" id="BK006945">
    <property type="protein sequence ID" value="DAA09734.1"/>
    <property type="molecule type" value="Genomic_DNA"/>
</dbReference>
<dbReference type="PIR" id="S16809">
    <property type="entry name" value="S16809"/>
</dbReference>
<dbReference type="RefSeq" id="NP_013537.1">
    <property type="nucleotide sequence ID" value="NM_001182321.1"/>
</dbReference>
<dbReference type="PDB" id="2LHI">
    <property type="method" value="NMR"/>
    <property type="chains" value="A=453-476"/>
</dbReference>
<dbReference type="PDBsum" id="2LHI"/>
<dbReference type="SMR" id="P23287"/>
<dbReference type="BioGRID" id="31692">
    <property type="interactions" value="127"/>
</dbReference>
<dbReference type="ComplexPortal" id="CPX-588">
    <property type="entry name" value="Calcineurin complex variant 1"/>
</dbReference>
<dbReference type="DIP" id="DIP-662N"/>
<dbReference type="FunCoup" id="P23287">
    <property type="interactions" value="609"/>
</dbReference>
<dbReference type="IntAct" id="P23287">
    <property type="interactions" value="27"/>
</dbReference>
<dbReference type="MINT" id="P23287"/>
<dbReference type="STRING" id="4932.YLR433C"/>
<dbReference type="iPTMnet" id="P23287"/>
<dbReference type="PaxDb" id="4932-YLR433C"/>
<dbReference type="PeptideAtlas" id="P23287"/>
<dbReference type="EnsemblFungi" id="YLR433C_mRNA">
    <property type="protein sequence ID" value="YLR433C"/>
    <property type="gene ID" value="YLR433C"/>
</dbReference>
<dbReference type="GeneID" id="851153"/>
<dbReference type="KEGG" id="sce:YLR433C"/>
<dbReference type="AGR" id="SGD:S000004425"/>
<dbReference type="SGD" id="S000004425">
    <property type="gene designation" value="CNA1"/>
</dbReference>
<dbReference type="VEuPathDB" id="FungiDB:YLR433C"/>
<dbReference type="eggNOG" id="KOG0375">
    <property type="taxonomic scope" value="Eukaryota"/>
</dbReference>
<dbReference type="GeneTree" id="ENSGT00940000176583"/>
<dbReference type="HOGENOM" id="CLU_004962_6_2_1"/>
<dbReference type="InParanoid" id="P23287"/>
<dbReference type="OMA" id="YPAACNF"/>
<dbReference type="OrthoDB" id="5593063at2759"/>
<dbReference type="BioCyc" id="YEAST:G3O-32491-MONOMER"/>
<dbReference type="BioGRID-ORCS" id="851153">
    <property type="hits" value="0 hits in 10 CRISPR screens"/>
</dbReference>
<dbReference type="EvolutionaryTrace" id="P23287"/>
<dbReference type="PRO" id="PR:P23287"/>
<dbReference type="Proteomes" id="UP000002311">
    <property type="component" value="Chromosome XII"/>
</dbReference>
<dbReference type="RNAct" id="P23287">
    <property type="molecule type" value="protein"/>
</dbReference>
<dbReference type="GO" id="GO:0005955">
    <property type="term" value="C:calcineurin complex"/>
    <property type="evidence" value="ECO:0000314"/>
    <property type="project" value="SGD"/>
</dbReference>
<dbReference type="GO" id="GO:0005737">
    <property type="term" value="C:cytoplasm"/>
    <property type="evidence" value="ECO:0000318"/>
    <property type="project" value="GO_Central"/>
</dbReference>
<dbReference type="GO" id="GO:0005516">
    <property type="term" value="F:calmodulin binding"/>
    <property type="evidence" value="ECO:0000318"/>
    <property type="project" value="GO_Central"/>
</dbReference>
<dbReference type="GO" id="GO:0033192">
    <property type="term" value="F:calmodulin-dependent protein phosphatase activity"/>
    <property type="evidence" value="ECO:0000318"/>
    <property type="project" value="GO_Central"/>
</dbReference>
<dbReference type="GO" id="GO:0046872">
    <property type="term" value="F:metal ion binding"/>
    <property type="evidence" value="ECO:0007669"/>
    <property type="project" value="UniProtKB-KW"/>
</dbReference>
<dbReference type="GO" id="GO:0097720">
    <property type="term" value="P:calcineurin-mediated signaling"/>
    <property type="evidence" value="ECO:0000318"/>
    <property type="project" value="GO_Central"/>
</dbReference>
<dbReference type="GO" id="GO:0071444">
    <property type="term" value="P:cellular response to pheromone"/>
    <property type="evidence" value="ECO:0000315"/>
    <property type="project" value="SGD"/>
</dbReference>
<dbReference type="GO" id="GO:0000747">
    <property type="term" value="P:conjugation with cellular fusion"/>
    <property type="evidence" value="ECO:0000315"/>
    <property type="project" value="SGD"/>
</dbReference>
<dbReference type="GO" id="GO:0031505">
    <property type="term" value="P:fungal-type cell wall organization"/>
    <property type="evidence" value="ECO:0000318"/>
    <property type="project" value="GO_Central"/>
</dbReference>
<dbReference type="GO" id="GO:0006873">
    <property type="term" value="P:intracellular monoatomic ion homeostasis"/>
    <property type="evidence" value="ECO:0000315"/>
    <property type="project" value="SGD"/>
</dbReference>
<dbReference type="GO" id="GO:0045893">
    <property type="term" value="P:positive regulation of DNA-templated transcription"/>
    <property type="evidence" value="ECO:0000303"/>
    <property type="project" value="ComplexPortal"/>
</dbReference>
<dbReference type="GO" id="GO:0022604">
    <property type="term" value="P:regulation of cell morphogenesis"/>
    <property type="evidence" value="ECO:0000303"/>
    <property type="project" value="ComplexPortal"/>
</dbReference>
<dbReference type="CDD" id="cd07416">
    <property type="entry name" value="MPP_PP2B"/>
    <property type="match status" value="1"/>
</dbReference>
<dbReference type="FunFam" id="3.60.21.10:FF:000053">
    <property type="entry name" value="Serine/threonine-protein phosphatase"/>
    <property type="match status" value="1"/>
</dbReference>
<dbReference type="Gene3D" id="3.60.21.10">
    <property type="match status" value="1"/>
</dbReference>
<dbReference type="InterPro" id="IPR004843">
    <property type="entry name" value="Calcineurin-like_PHP_ApaH"/>
</dbReference>
<dbReference type="InterPro" id="IPR029052">
    <property type="entry name" value="Metallo-depent_PP-like"/>
</dbReference>
<dbReference type="InterPro" id="IPR041751">
    <property type="entry name" value="MPP_PP2B"/>
</dbReference>
<dbReference type="InterPro" id="IPR043360">
    <property type="entry name" value="PP2B"/>
</dbReference>
<dbReference type="InterPro" id="IPR006186">
    <property type="entry name" value="Ser/Thr-sp_prot-phosphatase"/>
</dbReference>
<dbReference type="PANTHER" id="PTHR45673">
    <property type="entry name" value="SERINE/THREONINE-PROTEIN PHOSPHATASE 2B CATALYTIC SUBUNIT 1-RELATED"/>
    <property type="match status" value="1"/>
</dbReference>
<dbReference type="Pfam" id="PF00149">
    <property type="entry name" value="Metallophos"/>
    <property type="match status" value="1"/>
</dbReference>
<dbReference type="PRINTS" id="PR00114">
    <property type="entry name" value="STPHPHTASE"/>
</dbReference>
<dbReference type="SMART" id="SM00156">
    <property type="entry name" value="PP2Ac"/>
    <property type="match status" value="1"/>
</dbReference>
<dbReference type="SUPFAM" id="SSF56300">
    <property type="entry name" value="Metallo-dependent phosphatases"/>
    <property type="match status" value="1"/>
</dbReference>
<dbReference type="PROSITE" id="PS00125">
    <property type="entry name" value="SER_THR_PHOSPHATASE"/>
    <property type="match status" value="1"/>
</dbReference>
<name>PP2B1_YEAST</name>
<organism>
    <name type="scientific">Saccharomyces cerevisiae (strain ATCC 204508 / S288c)</name>
    <name type="common">Baker's yeast</name>
    <dbReference type="NCBI Taxonomy" id="559292"/>
    <lineage>
        <taxon>Eukaryota</taxon>
        <taxon>Fungi</taxon>
        <taxon>Dikarya</taxon>
        <taxon>Ascomycota</taxon>
        <taxon>Saccharomycotina</taxon>
        <taxon>Saccharomycetes</taxon>
        <taxon>Saccharomycetales</taxon>
        <taxon>Saccharomycetaceae</taxon>
        <taxon>Saccharomyces</taxon>
    </lineage>
</organism>
<feature type="initiator methionine" description="Removed" evidence="5">
    <location>
        <position position="1"/>
    </location>
</feature>
<feature type="chain" id="PRO_0000058836" description="Serine/threonine-protein phosphatase 2B catalytic subunit A1">
    <location>
        <begin position="2"/>
        <end position="553"/>
    </location>
</feature>
<feature type="region of interest" description="Disordered" evidence="2">
    <location>
        <begin position="413"/>
        <end position="447"/>
    </location>
</feature>
<feature type="compositionally biased region" description="Basic and acidic residues" evidence="2">
    <location>
        <begin position="417"/>
        <end position="427"/>
    </location>
</feature>
<feature type="active site" description="Proton donor" evidence="1">
    <location>
        <position position="180"/>
    </location>
</feature>
<feature type="binding site" evidence="1">
    <location>
        <position position="119"/>
    </location>
    <ligand>
        <name>Fe cation</name>
        <dbReference type="ChEBI" id="CHEBI:24875"/>
    </ligand>
</feature>
<feature type="binding site" evidence="1">
    <location>
        <position position="121"/>
    </location>
    <ligand>
        <name>Fe cation</name>
        <dbReference type="ChEBI" id="CHEBI:24875"/>
    </ligand>
</feature>
<feature type="binding site" evidence="1">
    <location>
        <position position="147"/>
    </location>
    <ligand>
        <name>Fe cation</name>
        <dbReference type="ChEBI" id="CHEBI:24875"/>
    </ligand>
</feature>
<feature type="binding site" evidence="1">
    <location>
        <position position="147"/>
    </location>
    <ligand>
        <name>Zn(2+)</name>
        <dbReference type="ChEBI" id="CHEBI:29105"/>
    </ligand>
</feature>
<feature type="binding site" evidence="1">
    <location>
        <position position="179"/>
    </location>
    <ligand>
        <name>Zn(2+)</name>
        <dbReference type="ChEBI" id="CHEBI:29105"/>
    </ligand>
</feature>
<feature type="binding site" evidence="1">
    <location>
        <position position="228"/>
    </location>
    <ligand>
        <name>Zn(2+)</name>
        <dbReference type="ChEBI" id="CHEBI:29105"/>
    </ligand>
</feature>
<feature type="binding site" evidence="1">
    <location>
        <position position="317"/>
    </location>
    <ligand>
        <name>Zn(2+)</name>
        <dbReference type="ChEBI" id="CHEBI:29105"/>
    </ligand>
</feature>
<feature type="modified residue" description="N-acetylserine" evidence="5">
    <location>
        <position position="2"/>
    </location>
</feature>
<feature type="sequence variant" description="In strain: S288c / GRF88.">
    <original>PI</original>
    <variation>SY</variation>
    <location>
        <begin position="45"/>
        <end position="46"/>
    </location>
</feature>
<feature type="helix" evidence="6">
    <location>
        <begin position="455"/>
        <end position="458"/>
    </location>
</feature>
<feature type="helix" evidence="6">
    <location>
        <begin position="460"/>
        <end position="474"/>
    </location>
</feature>
<sequence>MSKDLNSSRIKIIKPNDSYIKVDRKKDLTKYELENGKVISTKDRPIASVPAITGKIPSDEEVFDSKTGLPNHSFLREHFFHEGRLSKEQAIKILNMSTVALSKEPNLLKLKAPITICGDIHGQYYDLLKLFEVGGDPAEIDYLFLGDYVDRGAFSFECLIYLYSLKLNNLGRFWMLRGNHECKHLTSYFTFKNEMLHKYDMEVYDACCRSFNVLPLAALMNGQYFCVHGGISPELKSVEDVNKINRFREIPSRGLMCDLLWADPVENYDDARDGSEFDQSEDEFVPNSLRGCSFAFTFKASCKFLKANGLLSIIRAHEAQDAGYRMYKNNKVTGFPSLITMFSAPNYLDTYHNKAAVLKYEENVMNIRQFHMSPHPYWLPDFMDVFTWSLPFVGEKVTSMLVSILNICSEQELDPESEPKAAEETVKARANATKETGTPSDEKASSAILEDETRRKALRNKILAIAKVSRMFSVLREESEKVEYLKTMNAGVLPRGALARGTEGLNETLSTFEKARKEDLINEKLPPSLSEVEQEKIKYYEKILKGAEKKPQL</sequence>
<protein>
    <recommendedName>
        <fullName>Serine/threonine-protein phosphatase 2B catalytic subunit A1</fullName>
        <ecNumber>3.1.3.16</ecNumber>
    </recommendedName>
    <alternativeName>
        <fullName>Calcineurin A1</fullName>
    </alternativeName>
    <alternativeName>
        <fullName>Calmodulin-binding protein 1</fullName>
    </alternativeName>
</protein>
<reference key="1">
    <citation type="journal article" date="1991" name="Proc. Natl. Acad. Sci. U.S.A.">
        <title>Yeast has homologs (CNA1 and CNA2 gene products) of mammalian calcineurin, a calmodulin-regulated phosphoprotein phosphatase.</title>
        <authorList>
            <person name="Cyert M.S."/>
            <person name="Kunisawa R."/>
            <person name="Kaim D."/>
            <person name="Thorner J."/>
        </authorList>
    </citation>
    <scope>NUCLEOTIDE SEQUENCE [GENOMIC DNA]</scope>
    <source>
        <strain>S288c / GRF88</strain>
    </source>
</reference>
<reference key="2">
    <citation type="journal article" date="1992" name="Eur. J. Biochem.">
        <title>Identification and molecular characterization of the calmodulin-binding subunit gene (CMP1) of protein phosphatase 2B from Saccharomyces cerevisiae. An alpha-factor inducible gene.</title>
        <authorList>
            <person name="Ye R.R."/>
            <person name="Bretscher A."/>
        </authorList>
    </citation>
    <scope>NUCLEOTIDE SEQUENCE [GENOMIC DNA]</scope>
    <source>
        <strain>20B-12</strain>
    </source>
</reference>
<reference key="3">
    <citation type="journal article" date="1991" name="Mol. Gen. Genet.">
        <title>The Saccharomyces cerevisiae genes (CMP1 and CMP2) encoding calmodulin-binding proteins homologous to the catalytic subunit of mammalian protein phosphatase 2B.</title>
        <authorList>
            <person name="Liu Y."/>
            <person name="Ishii S."/>
            <person name="Tokai M."/>
            <person name="Tsutsumi H."/>
            <person name="Ohki O."/>
            <person name="Akada R."/>
            <person name="Tanaka K."/>
            <person name="Tsuchiya E."/>
            <person name="Fukui S."/>
            <person name="Miyakawa T."/>
        </authorList>
    </citation>
    <scope>NUCLEOTIDE SEQUENCE [GENOMIC DNA]</scope>
</reference>
<reference key="4">
    <citation type="journal article" date="1997" name="Nature">
        <title>The nucleotide sequence of Saccharomyces cerevisiae chromosome XII.</title>
        <authorList>
            <person name="Johnston M."/>
            <person name="Hillier L.W."/>
            <person name="Riles L."/>
            <person name="Albermann K."/>
            <person name="Andre B."/>
            <person name="Ansorge W."/>
            <person name="Benes V."/>
            <person name="Brueckner M."/>
            <person name="Delius H."/>
            <person name="Dubois E."/>
            <person name="Duesterhoeft A."/>
            <person name="Entian K.-D."/>
            <person name="Floeth M."/>
            <person name="Goffeau A."/>
            <person name="Hebling U."/>
            <person name="Heumann K."/>
            <person name="Heuss-Neitzel D."/>
            <person name="Hilbert H."/>
            <person name="Hilger F."/>
            <person name="Kleine K."/>
            <person name="Koetter P."/>
            <person name="Louis E.J."/>
            <person name="Messenguy F."/>
            <person name="Mewes H.-W."/>
            <person name="Miosga T."/>
            <person name="Moestl D."/>
            <person name="Mueller-Auer S."/>
            <person name="Nentwich U."/>
            <person name="Obermaier B."/>
            <person name="Piravandi E."/>
            <person name="Pohl T.M."/>
            <person name="Portetelle D."/>
            <person name="Purnelle B."/>
            <person name="Rechmann S."/>
            <person name="Rieger M."/>
            <person name="Rinke M."/>
            <person name="Rose M."/>
            <person name="Scharfe M."/>
            <person name="Scherens B."/>
            <person name="Scholler P."/>
            <person name="Schwager C."/>
            <person name="Schwarz S."/>
            <person name="Underwood A.P."/>
            <person name="Urrestarazu L.A."/>
            <person name="Vandenbol M."/>
            <person name="Verhasselt P."/>
            <person name="Vierendeels F."/>
            <person name="Voet M."/>
            <person name="Volckaert G."/>
            <person name="Voss H."/>
            <person name="Wambutt R."/>
            <person name="Wedler E."/>
            <person name="Wedler H."/>
            <person name="Zimmermann F.K."/>
            <person name="Zollner A."/>
            <person name="Hani J."/>
            <person name="Hoheisel J.D."/>
        </authorList>
    </citation>
    <scope>NUCLEOTIDE SEQUENCE [LARGE SCALE GENOMIC DNA]</scope>
    <source>
        <strain>ATCC 204508 / S288c</strain>
    </source>
</reference>
<reference key="5">
    <citation type="journal article" date="2014" name="G3 (Bethesda)">
        <title>The reference genome sequence of Saccharomyces cerevisiae: Then and now.</title>
        <authorList>
            <person name="Engel S.R."/>
            <person name="Dietrich F.S."/>
            <person name="Fisk D.G."/>
            <person name="Binkley G."/>
            <person name="Balakrishnan R."/>
            <person name="Costanzo M.C."/>
            <person name="Dwight S.S."/>
            <person name="Hitz B.C."/>
            <person name="Karra K."/>
            <person name="Nash R.S."/>
            <person name="Weng S."/>
            <person name="Wong E.D."/>
            <person name="Lloyd P."/>
            <person name="Skrzypek M.S."/>
            <person name="Miyasato S.R."/>
            <person name="Simison M."/>
            <person name="Cherry J.M."/>
        </authorList>
    </citation>
    <scope>GENOME REANNOTATION</scope>
    <source>
        <strain>ATCC 204508 / S288c</strain>
    </source>
</reference>
<reference key="6">
    <citation type="journal article" date="2007" name="Genome Res.">
        <title>Approaching a complete repository of sequence-verified protein-encoding clones for Saccharomyces cerevisiae.</title>
        <authorList>
            <person name="Hu Y."/>
            <person name="Rolfs A."/>
            <person name="Bhullar B."/>
            <person name="Murthy T.V.S."/>
            <person name="Zhu C."/>
            <person name="Berger M.F."/>
            <person name="Camargo A.A."/>
            <person name="Kelley F."/>
            <person name="McCarron S."/>
            <person name="Jepson D."/>
            <person name="Richardson A."/>
            <person name="Raphael J."/>
            <person name="Moreira D."/>
            <person name="Taycher E."/>
            <person name="Zuo D."/>
            <person name="Mohr S."/>
            <person name="Kane M.F."/>
            <person name="Williamson J."/>
            <person name="Simpson A.J.G."/>
            <person name="Bulyk M.L."/>
            <person name="Harlow E."/>
            <person name="Marsischky G."/>
            <person name="Kolodner R.D."/>
            <person name="LaBaer J."/>
        </authorList>
    </citation>
    <scope>NUCLEOTIDE SEQUENCE [GENOMIC DNA]</scope>
    <source>
        <strain>ATCC 204508 / S288c</strain>
    </source>
</reference>
<reference key="7">
    <citation type="journal article" date="2003" name="Nature">
        <title>Global analysis of protein expression in yeast.</title>
        <authorList>
            <person name="Ghaemmaghami S."/>
            <person name="Huh W.-K."/>
            <person name="Bower K."/>
            <person name="Howson R.W."/>
            <person name="Belle A."/>
            <person name="Dephoure N."/>
            <person name="O'Shea E.K."/>
            <person name="Weissman J.S."/>
        </authorList>
    </citation>
    <scope>LEVEL OF PROTEIN EXPRESSION [LARGE SCALE ANALYSIS]</scope>
</reference>
<reference key="8">
    <citation type="journal article" date="2012" name="Proc. Natl. Acad. Sci. U.S.A.">
        <title>N-terminal acetylome analyses and functional insights of the N-terminal acetyltransferase NatB.</title>
        <authorList>
            <person name="Van Damme P."/>
            <person name="Lasa M."/>
            <person name="Polevoda B."/>
            <person name="Gazquez C."/>
            <person name="Elosegui-Artola A."/>
            <person name="Kim D.S."/>
            <person name="De Juan-Pardo E."/>
            <person name="Demeyer K."/>
            <person name="Hole K."/>
            <person name="Larrea E."/>
            <person name="Timmerman E."/>
            <person name="Prieto J."/>
            <person name="Arnesen T."/>
            <person name="Sherman F."/>
            <person name="Gevaert K."/>
            <person name="Aldabe R."/>
        </authorList>
    </citation>
    <scope>ACETYLATION [LARGE SCALE ANALYSIS] AT SER-2</scope>
    <scope>CLEAVAGE OF INITIATOR METHIONINE [LARGE SCALE ANALYSIS]</scope>
    <scope>IDENTIFICATION BY MASS SPECTROMETRY [LARGE SCALE ANALYSIS]</scope>
</reference>